<comment type="function">
    <text evidence="1">Catalyzes the ATP-dependent phosphorylation of L-homoserine to L-homoserine phosphate.</text>
</comment>
<comment type="catalytic activity">
    <reaction evidence="1">
        <text>L-homoserine + ATP = O-phospho-L-homoserine + ADP + H(+)</text>
        <dbReference type="Rhea" id="RHEA:13985"/>
        <dbReference type="ChEBI" id="CHEBI:15378"/>
        <dbReference type="ChEBI" id="CHEBI:30616"/>
        <dbReference type="ChEBI" id="CHEBI:57476"/>
        <dbReference type="ChEBI" id="CHEBI:57590"/>
        <dbReference type="ChEBI" id="CHEBI:456216"/>
        <dbReference type="EC" id="2.7.1.39"/>
    </reaction>
</comment>
<comment type="pathway">
    <text evidence="1">Amino-acid biosynthesis; L-threonine biosynthesis; L-threonine from L-aspartate: step 4/5.</text>
</comment>
<comment type="subcellular location">
    <subcellularLocation>
        <location evidence="1">Cytoplasm</location>
    </subcellularLocation>
</comment>
<comment type="similarity">
    <text evidence="1">Belongs to the GHMP kinase family. Homoserine kinase subfamily.</text>
</comment>
<keyword id="KW-0028">Amino-acid biosynthesis</keyword>
<keyword id="KW-0067">ATP-binding</keyword>
<keyword id="KW-0963">Cytoplasm</keyword>
<keyword id="KW-0418">Kinase</keyword>
<keyword id="KW-0547">Nucleotide-binding</keyword>
<keyword id="KW-0791">Threonine biosynthesis</keyword>
<keyword id="KW-0808">Transferase</keyword>
<accession>B0R6D7</accession>
<organism>
    <name type="scientific">Halobacterium salinarum (strain ATCC 29341 / DSM 671 / R1)</name>
    <dbReference type="NCBI Taxonomy" id="478009"/>
    <lineage>
        <taxon>Archaea</taxon>
        <taxon>Methanobacteriati</taxon>
        <taxon>Methanobacteriota</taxon>
        <taxon>Stenosarchaea group</taxon>
        <taxon>Halobacteria</taxon>
        <taxon>Halobacteriales</taxon>
        <taxon>Halobacteriaceae</taxon>
        <taxon>Halobacterium</taxon>
        <taxon>Halobacterium salinarum NRC-34001</taxon>
    </lineage>
</organism>
<name>KHSE_HALS3</name>
<protein>
    <recommendedName>
        <fullName evidence="1">Homoserine kinase</fullName>
        <shortName evidence="1">HK</shortName>
        <shortName evidence="1">HSK</shortName>
        <ecNumber evidence="1">2.7.1.39</ecNumber>
    </recommendedName>
</protein>
<feature type="chain" id="PRO_1000122426" description="Homoserine kinase">
    <location>
        <begin position="1"/>
        <end position="301"/>
    </location>
</feature>
<feature type="binding site" evidence="1">
    <location>
        <begin position="81"/>
        <end position="91"/>
    </location>
    <ligand>
        <name>ATP</name>
        <dbReference type="ChEBI" id="CHEBI:30616"/>
    </ligand>
</feature>
<sequence>MVVTVRAPATSANLGSGFDVFGVALSKPADVVRVERADTTTITVTGAGAQYVPTDPQENTAGVVAAALDAPATIHINKGVRPSSGLGSSAASAAAATVALAELYDRPLDDDALVRAAAQGEAAASGVAHADNVAPAILGGFTIVREDGIEHVDASLALAVCLPETTVSTRDARGVVPESAAMEAVVSTVESAATLTLGMCENDPQRVGRGVEDALVTPARARLMDGYEAASAAARDAGATGVTISGSGPGVVAVCRRRDRKRVAAALVDGFDSAGVAASAYQTRIGDGATRLAADGDDRAP</sequence>
<dbReference type="EC" id="2.7.1.39" evidence="1"/>
<dbReference type="EMBL" id="AM774415">
    <property type="protein sequence ID" value="CAP14306.1"/>
    <property type="molecule type" value="Genomic_DNA"/>
</dbReference>
<dbReference type="RefSeq" id="WP_010903313.1">
    <property type="nucleotide sequence ID" value="NC_010364.1"/>
</dbReference>
<dbReference type="SMR" id="B0R6D7"/>
<dbReference type="EnsemblBacteria" id="CAP14306">
    <property type="protein sequence ID" value="CAP14306"/>
    <property type="gene ID" value="OE_3531R"/>
</dbReference>
<dbReference type="KEGG" id="hsl:OE_3531R"/>
<dbReference type="HOGENOM" id="CLU_041243_1_1_2"/>
<dbReference type="PhylomeDB" id="B0R6D7"/>
<dbReference type="UniPathway" id="UPA00050">
    <property type="reaction ID" value="UER00064"/>
</dbReference>
<dbReference type="Proteomes" id="UP000001321">
    <property type="component" value="Chromosome"/>
</dbReference>
<dbReference type="GO" id="GO:0005737">
    <property type="term" value="C:cytoplasm"/>
    <property type="evidence" value="ECO:0007669"/>
    <property type="project" value="UniProtKB-SubCell"/>
</dbReference>
<dbReference type="GO" id="GO:0005524">
    <property type="term" value="F:ATP binding"/>
    <property type="evidence" value="ECO:0007669"/>
    <property type="project" value="UniProtKB-UniRule"/>
</dbReference>
<dbReference type="GO" id="GO:0004413">
    <property type="term" value="F:homoserine kinase activity"/>
    <property type="evidence" value="ECO:0007669"/>
    <property type="project" value="UniProtKB-UniRule"/>
</dbReference>
<dbReference type="GO" id="GO:0009088">
    <property type="term" value="P:threonine biosynthetic process"/>
    <property type="evidence" value="ECO:0007669"/>
    <property type="project" value="UniProtKB-UniRule"/>
</dbReference>
<dbReference type="Gene3D" id="3.30.230.10">
    <property type="match status" value="1"/>
</dbReference>
<dbReference type="Gene3D" id="3.30.70.890">
    <property type="entry name" value="GHMP kinase, C-terminal domain"/>
    <property type="match status" value="1"/>
</dbReference>
<dbReference type="HAMAP" id="MF_00384">
    <property type="entry name" value="Homoser_kinase"/>
    <property type="match status" value="1"/>
</dbReference>
<dbReference type="InterPro" id="IPR013750">
    <property type="entry name" value="GHMP_kinase_C_dom"/>
</dbReference>
<dbReference type="InterPro" id="IPR036554">
    <property type="entry name" value="GHMP_kinase_C_sf"/>
</dbReference>
<dbReference type="InterPro" id="IPR006204">
    <property type="entry name" value="GHMP_kinase_N_dom"/>
</dbReference>
<dbReference type="InterPro" id="IPR000870">
    <property type="entry name" value="Homoserine_kinase"/>
</dbReference>
<dbReference type="InterPro" id="IPR020568">
    <property type="entry name" value="Ribosomal_Su5_D2-typ_SF"/>
</dbReference>
<dbReference type="InterPro" id="IPR014721">
    <property type="entry name" value="Ribsml_uS5_D2-typ_fold_subgr"/>
</dbReference>
<dbReference type="NCBIfam" id="NF002288">
    <property type="entry name" value="PRK01212.1-4"/>
    <property type="match status" value="1"/>
</dbReference>
<dbReference type="NCBIfam" id="TIGR00191">
    <property type="entry name" value="thrB"/>
    <property type="match status" value="1"/>
</dbReference>
<dbReference type="PANTHER" id="PTHR20861:SF1">
    <property type="entry name" value="HOMOSERINE KINASE"/>
    <property type="match status" value="1"/>
</dbReference>
<dbReference type="PANTHER" id="PTHR20861">
    <property type="entry name" value="HOMOSERINE/4-DIPHOSPHOCYTIDYL-2-C-METHYL-D-ERYTHRITOL KINASE"/>
    <property type="match status" value="1"/>
</dbReference>
<dbReference type="Pfam" id="PF08544">
    <property type="entry name" value="GHMP_kinases_C"/>
    <property type="match status" value="1"/>
</dbReference>
<dbReference type="Pfam" id="PF00288">
    <property type="entry name" value="GHMP_kinases_N"/>
    <property type="match status" value="1"/>
</dbReference>
<dbReference type="PIRSF" id="PIRSF000676">
    <property type="entry name" value="Homoser_kin"/>
    <property type="match status" value="1"/>
</dbReference>
<dbReference type="PRINTS" id="PR00958">
    <property type="entry name" value="HOMSERKINASE"/>
</dbReference>
<dbReference type="SUPFAM" id="SSF55060">
    <property type="entry name" value="GHMP Kinase, C-terminal domain"/>
    <property type="match status" value="1"/>
</dbReference>
<dbReference type="SUPFAM" id="SSF54211">
    <property type="entry name" value="Ribosomal protein S5 domain 2-like"/>
    <property type="match status" value="1"/>
</dbReference>
<reference key="1">
    <citation type="journal article" date="2008" name="Genomics">
        <title>Evolution in the laboratory: the genome of Halobacterium salinarum strain R1 compared to that of strain NRC-1.</title>
        <authorList>
            <person name="Pfeiffer F."/>
            <person name="Schuster S.C."/>
            <person name="Broicher A."/>
            <person name="Falb M."/>
            <person name="Palm P."/>
            <person name="Rodewald K."/>
            <person name="Ruepp A."/>
            <person name="Soppa J."/>
            <person name="Tittor J."/>
            <person name="Oesterhelt D."/>
        </authorList>
    </citation>
    <scope>NUCLEOTIDE SEQUENCE [LARGE SCALE GENOMIC DNA]</scope>
    <source>
        <strain>ATCC 29341 / DSM 671 / R1</strain>
    </source>
</reference>
<evidence type="ECO:0000255" key="1">
    <source>
        <dbReference type="HAMAP-Rule" id="MF_00384"/>
    </source>
</evidence>
<gene>
    <name evidence="1" type="primary">thrB</name>
    <name type="ordered locus">OE_3531R</name>
</gene>
<proteinExistence type="inferred from homology"/>